<feature type="chain" id="PRO_0000345496" description="Small ribosomal subunit protein bS18">
    <location>
        <begin position="1"/>
        <end position="83"/>
    </location>
</feature>
<gene>
    <name evidence="1" type="primary">rpsR</name>
    <name type="ordered locus">M446_2591</name>
</gene>
<name>RS18_METS4</name>
<dbReference type="EMBL" id="CP000943">
    <property type="protein sequence ID" value="ACA17030.1"/>
    <property type="molecule type" value="Genomic_DNA"/>
</dbReference>
<dbReference type="RefSeq" id="WP_012332436.1">
    <property type="nucleotide sequence ID" value="NC_010511.1"/>
</dbReference>
<dbReference type="SMR" id="B0UL30"/>
<dbReference type="STRING" id="426117.M446_2591"/>
<dbReference type="KEGG" id="met:M446_2591"/>
<dbReference type="eggNOG" id="COG0238">
    <property type="taxonomic scope" value="Bacteria"/>
</dbReference>
<dbReference type="HOGENOM" id="CLU_148710_2_3_5"/>
<dbReference type="GO" id="GO:0022627">
    <property type="term" value="C:cytosolic small ribosomal subunit"/>
    <property type="evidence" value="ECO:0007669"/>
    <property type="project" value="TreeGrafter"/>
</dbReference>
<dbReference type="GO" id="GO:0070181">
    <property type="term" value="F:small ribosomal subunit rRNA binding"/>
    <property type="evidence" value="ECO:0007669"/>
    <property type="project" value="TreeGrafter"/>
</dbReference>
<dbReference type="GO" id="GO:0003735">
    <property type="term" value="F:structural constituent of ribosome"/>
    <property type="evidence" value="ECO:0007669"/>
    <property type="project" value="InterPro"/>
</dbReference>
<dbReference type="GO" id="GO:0006412">
    <property type="term" value="P:translation"/>
    <property type="evidence" value="ECO:0007669"/>
    <property type="project" value="UniProtKB-UniRule"/>
</dbReference>
<dbReference type="FunFam" id="4.10.640.10:FF:000006">
    <property type="entry name" value="30S ribosomal protein S18"/>
    <property type="match status" value="1"/>
</dbReference>
<dbReference type="Gene3D" id="4.10.640.10">
    <property type="entry name" value="Ribosomal protein S18"/>
    <property type="match status" value="1"/>
</dbReference>
<dbReference type="HAMAP" id="MF_00270">
    <property type="entry name" value="Ribosomal_bS18"/>
    <property type="match status" value="1"/>
</dbReference>
<dbReference type="InterPro" id="IPR001648">
    <property type="entry name" value="Ribosomal_bS18"/>
</dbReference>
<dbReference type="InterPro" id="IPR018275">
    <property type="entry name" value="Ribosomal_bS18_CS"/>
</dbReference>
<dbReference type="InterPro" id="IPR036870">
    <property type="entry name" value="Ribosomal_bS18_sf"/>
</dbReference>
<dbReference type="NCBIfam" id="TIGR00165">
    <property type="entry name" value="S18"/>
    <property type="match status" value="1"/>
</dbReference>
<dbReference type="PANTHER" id="PTHR13479">
    <property type="entry name" value="30S RIBOSOMAL PROTEIN S18"/>
    <property type="match status" value="1"/>
</dbReference>
<dbReference type="PANTHER" id="PTHR13479:SF40">
    <property type="entry name" value="SMALL RIBOSOMAL SUBUNIT PROTEIN BS18M"/>
    <property type="match status" value="1"/>
</dbReference>
<dbReference type="Pfam" id="PF01084">
    <property type="entry name" value="Ribosomal_S18"/>
    <property type="match status" value="1"/>
</dbReference>
<dbReference type="PRINTS" id="PR00974">
    <property type="entry name" value="RIBOSOMALS18"/>
</dbReference>
<dbReference type="SUPFAM" id="SSF46911">
    <property type="entry name" value="Ribosomal protein S18"/>
    <property type="match status" value="1"/>
</dbReference>
<dbReference type="PROSITE" id="PS00057">
    <property type="entry name" value="RIBOSOMAL_S18"/>
    <property type="match status" value="1"/>
</dbReference>
<proteinExistence type="inferred from homology"/>
<protein>
    <recommendedName>
        <fullName evidence="1">Small ribosomal subunit protein bS18</fullName>
    </recommendedName>
    <alternativeName>
        <fullName evidence="2">30S ribosomal protein S18</fullName>
    </alternativeName>
</protein>
<organism>
    <name type="scientific">Methylobacterium sp. (strain 4-46)</name>
    <dbReference type="NCBI Taxonomy" id="426117"/>
    <lineage>
        <taxon>Bacteria</taxon>
        <taxon>Pseudomonadati</taxon>
        <taxon>Pseudomonadota</taxon>
        <taxon>Alphaproteobacteria</taxon>
        <taxon>Hyphomicrobiales</taxon>
        <taxon>Methylobacteriaceae</taxon>
        <taxon>Methylobacterium</taxon>
    </lineage>
</organism>
<evidence type="ECO:0000255" key="1">
    <source>
        <dbReference type="HAMAP-Rule" id="MF_00270"/>
    </source>
</evidence>
<evidence type="ECO:0000305" key="2"/>
<reference key="1">
    <citation type="submission" date="2008-02" db="EMBL/GenBank/DDBJ databases">
        <title>Complete sequence of chromosome of Methylobacterium sp. 4-46.</title>
        <authorList>
            <consortium name="US DOE Joint Genome Institute"/>
            <person name="Copeland A."/>
            <person name="Lucas S."/>
            <person name="Lapidus A."/>
            <person name="Glavina del Rio T."/>
            <person name="Dalin E."/>
            <person name="Tice H."/>
            <person name="Bruce D."/>
            <person name="Goodwin L."/>
            <person name="Pitluck S."/>
            <person name="Chertkov O."/>
            <person name="Brettin T."/>
            <person name="Detter J.C."/>
            <person name="Han C."/>
            <person name="Kuske C.R."/>
            <person name="Schmutz J."/>
            <person name="Larimer F."/>
            <person name="Land M."/>
            <person name="Hauser L."/>
            <person name="Kyrpides N."/>
            <person name="Ivanova N."/>
            <person name="Marx C.J."/>
            <person name="Richardson P."/>
        </authorList>
    </citation>
    <scope>NUCLEOTIDE SEQUENCE [LARGE SCALE GENOMIC DNA]</scope>
    <source>
        <strain>4-46</strain>
    </source>
</reference>
<accession>B0UL30</accession>
<keyword id="KW-0687">Ribonucleoprotein</keyword>
<keyword id="KW-0689">Ribosomal protein</keyword>
<keyword id="KW-0694">RNA-binding</keyword>
<keyword id="KW-0699">rRNA-binding</keyword>
<comment type="function">
    <text evidence="1">Binds as a heterodimer with protein bS6 to the central domain of the 16S rRNA, where it helps stabilize the platform of the 30S subunit.</text>
</comment>
<comment type="subunit">
    <text evidence="1">Part of the 30S ribosomal subunit. Forms a tight heterodimer with protein bS6.</text>
</comment>
<comment type="similarity">
    <text evidence="1">Belongs to the bacterial ribosomal protein bS18 family.</text>
</comment>
<sequence>MAFGAGGGGGRRPFFRRRKTCPFSGPNAPKIDYKDVKLLSRYVSERGKIVPSRITAVSAKKQRELAQAIKRARFLGFLPYVIR</sequence>